<protein>
    <recommendedName>
        <fullName>Nephrocystin-3</fullName>
    </recommendedName>
</protein>
<sequence>MGTASSLVSPTGGEVIEDTYGAGGGEACEIPVEVKPKARLLRSSFRRGAGAGPGSLPRAAGGGGLLGASFKSTGSSVPELEYAAAEFERLKKEYEIFRVSKNQELLSMGRREAKLDTENKRLRAELQALQKTYQKILREKEGALEAKYQAMERAVTFEHDRDRVKRQFKIFRETKENEIQDLLRAKRELESKLQRLQAQGIQVFDPGESDSDDNCTDVTAAGTQCEYWASRALGSEHSIGSMIQLPQPFRGPEFAHSSIDVEGPFANINRDDWDAAVAGLLQATPLFSHSLWSHPVRCYLIYTDETQPEMELFLKDHSPKLKRMCETMGYFFLAVYFPLDVENQYLTVRKWEIEKSSLVILFLHSTLPSFLLEDCEEAFLQNPEGKPGLIYHRLEDGKVTCDSVQQFLDQVSNLGKTTKAKIIEHSGDPAEGVCKIYVGVEKIIKQDILGLENTDVEEKDGGREDSTPEEDDFGDVLWDIHDEQEQMEAFQQTSSSAHELGFEKYYQRLDDLVVAPAPIPPLLVSGGPGSGKSLLLSKWIQLQQKHFPNTLILSHFVGRPMSTSSESSLIIKRLTLKLMQHFWAVSALTLDPAKLLEEFPHWLEKLSARHQGSIIIIIDSIDQVQQVEKHMKWLIDPLPVNVRVIVSVNVETCPTAWRLWPTLHLDPLSPKDAISIITAECYSMDVRLSREQEKMLEQHCRPATTRHALYVTLFSKMMACAGRGGNVAETLHQCLQCQDTVSLYKLVLHHVRESMPSDRDKEWMTQILCLINVSHNGVSESELMELYPEMSWLSLTSIVHSLHKMHLLTYSCGLLRFQHLQAWETVRLQYLEDPALVSSYREKLISYFASQLSQDRVTWRSADELPWLFQQQGSKQKLHSCLLNLLVAQNLYKRGHFAELLSYWQFVGKDKGAMATEYFESLKQYENSEGEENMLCLADLYETLGRFLKDLGLLSQAVVPLQRSLEIRETALDPDHPRVAQSLHQLAGVYVQWKKFGDAEQLYKQALEISENAYGADHPHAARELEALATLYHKQNKYEQAEHFRKKSVIIRQQATRRKGSLYGFALLRRRALQLEELTLGKDKPENARTLNELGVLYFLQNNLETAEQFLKRSLEMRERVLGPDHPDCAQSLNNLAALCNEKKQYEKAEELYERALDIRRRALAPDHPSLAYTVKHLAILYKKTGKVDKAVPLYELAVEIRQKSFGPKHPSVATALVNLAVLHSQMKKHSEALPLYERALKIYEDSLGRMHPRVGETLKNLAVLSYEEGNFEKAAELYKRAMEIKEAETSLLGGKAPSRQSSSGDTFLFKTTHSPNVFLPQGQS</sequence>
<keyword id="KW-0025">Alternative splicing</keyword>
<keyword id="KW-0966">Cell projection</keyword>
<keyword id="KW-0969">Cilium</keyword>
<keyword id="KW-0175">Coiled coil</keyword>
<keyword id="KW-0225">Disease variant</keyword>
<keyword id="KW-0449">Lipoprotein</keyword>
<keyword id="KW-0519">Myristate</keyword>
<keyword id="KW-1185">Reference proteome</keyword>
<keyword id="KW-0677">Repeat</keyword>
<keyword id="KW-0802">TPR repeat</keyword>
<keyword id="KW-0879">Wnt signaling pathway</keyword>
<organism>
    <name type="scientific">Mus musculus</name>
    <name type="common">Mouse</name>
    <dbReference type="NCBI Taxonomy" id="10090"/>
    <lineage>
        <taxon>Eukaryota</taxon>
        <taxon>Metazoa</taxon>
        <taxon>Chordata</taxon>
        <taxon>Craniata</taxon>
        <taxon>Vertebrata</taxon>
        <taxon>Euteleostomi</taxon>
        <taxon>Mammalia</taxon>
        <taxon>Eutheria</taxon>
        <taxon>Euarchontoglires</taxon>
        <taxon>Glires</taxon>
        <taxon>Rodentia</taxon>
        <taxon>Myomorpha</taxon>
        <taxon>Muroidea</taxon>
        <taxon>Muridae</taxon>
        <taxon>Murinae</taxon>
        <taxon>Mus</taxon>
        <taxon>Mus</taxon>
    </lineage>
</organism>
<proteinExistence type="evidence at protein level"/>
<name>NPHP3_MOUSE</name>
<reference key="1">
    <citation type="journal article" date="2003" name="Nat. Genet.">
        <title>Mutations in a novel gene, NPHP3, cause adolescent nephronophthisis, tapeto-retinal degeneration and hepatic fibrosis.</title>
        <authorList>
            <person name="Olbrich H."/>
            <person name="Fliegauf M."/>
            <person name="Hoefele J."/>
            <person name="Kispert A."/>
            <person name="Otto E."/>
            <person name="Volz A."/>
            <person name="Wolf M.T."/>
            <person name="Sasmaz G."/>
            <person name="Trauer U."/>
            <person name="Reinhardt R."/>
            <person name="Sudbrak R."/>
            <person name="Antignac C."/>
            <person name="Gretz N."/>
            <person name="Walz G."/>
            <person name="Schermer B."/>
            <person name="Benzing T."/>
            <person name="Hildebrandt F."/>
            <person name="Omran H."/>
        </authorList>
    </citation>
    <scope>NUCLEOTIDE SEQUENCE [MRNA] (ISOFORM 1)</scope>
    <scope>DEVELOPMENTAL STAGE</scope>
    <scope>VARIANT PCY SER-614</scope>
    <source>
        <strain>BALB/cJ</strain>
    </source>
</reference>
<reference key="2">
    <citation type="journal article" date="2005" name="Science">
        <title>The transcriptional landscape of the mammalian genome.</title>
        <authorList>
            <person name="Carninci P."/>
            <person name="Kasukawa T."/>
            <person name="Katayama S."/>
            <person name="Gough J."/>
            <person name="Frith M.C."/>
            <person name="Maeda N."/>
            <person name="Oyama R."/>
            <person name="Ravasi T."/>
            <person name="Lenhard B."/>
            <person name="Wells C."/>
            <person name="Kodzius R."/>
            <person name="Shimokawa K."/>
            <person name="Bajic V.B."/>
            <person name="Brenner S.E."/>
            <person name="Batalov S."/>
            <person name="Forrest A.R."/>
            <person name="Zavolan M."/>
            <person name="Davis M.J."/>
            <person name="Wilming L.G."/>
            <person name="Aidinis V."/>
            <person name="Allen J.E."/>
            <person name="Ambesi-Impiombato A."/>
            <person name="Apweiler R."/>
            <person name="Aturaliya R.N."/>
            <person name="Bailey T.L."/>
            <person name="Bansal M."/>
            <person name="Baxter L."/>
            <person name="Beisel K.W."/>
            <person name="Bersano T."/>
            <person name="Bono H."/>
            <person name="Chalk A.M."/>
            <person name="Chiu K.P."/>
            <person name="Choudhary V."/>
            <person name="Christoffels A."/>
            <person name="Clutterbuck D.R."/>
            <person name="Crowe M.L."/>
            <person name="Dalla E."/>
            <person name="Dalrymple B.P."/>
            <person name="de Bono B."/>
            <person name="Della Gatta G."/>
            <person name="di Bernardo D."/>
            <person name="Down T."/>
            <person name="Engstrom P."/>
            <person name="Fagiolini M."/>
            <person name="Faulkner G."/>
            <person name="Fletcher C.F."/>
            <person name="Fukushima T."/>
            <person name="Furuno M."/>
            <person name="Futaki S."/>
            <person name="Gariboldi M."/>
            <person name="Georgii-Hemming P."/>
            <person name="Gingeras T.R."/>
            <person name="Gojobori T."/>
            <person name="Green R.E."/>
            <person name="Gustincich S."/>
            <person name="Harbers M."/>
            <person name="Hayashi Y."/>
            <person name="Hensch T.K."/>
            <person name="Hirokawa N."/>
            <person name="Hill D."/>
            <person name="Huminiecki L."/>
            <person name="Iacono M."/>
            <person name="Ikeo K."/>
            <person name="Iwama A."/>
            <person name="Ishikawa T."/>
            <person name="Jakt M."/>
            <person name="Kanapin A."/>
            <person name="Katoh M."/>
            <person name="Kawasawa Y."/>
            <person name="Kelso J."/>
            <person name="Kitamura H."/>
            <person name="Kitano H."/>
            <person name="Kollias G."/>
            <person name="Krishnan S.P."/>
            <person name="Kruger A."/>
            <person name="Kummerfeld S.K."/>
            <person name="Kurochkin I.V."/>
            <person name="Lareau L.F."/>
            <person name="Lazarevic D."/>
            <person name="Lipovich L."/>
            <person name="Liu J."/>
            <person name="Liuni S."/>
            <person name="McWilliam S."/>
            <person name="Madan Babu M."/>
            <person name="Madera M."/>
            <person name="Marchionni L."/>
            <person name="Matsuda H."/>
            <person name="Matsuzawa S."/>
            <person name="Miki H."/>
            <person name="Mignone F."/>
            <person name="Miyake S."/>
            <person name="Morris K."/>
            <person name="Mottagui-Tabar S."/>
            <person name="Mulder N."/>
            <person name="Nakano N."/>
            <person name="Nakauchi H."/>
            <person name="Ng P."/>
            <person name="Nilsson R."/>
            <person name="Nishiguchi S."/>
            <person name="Nishikawa S."/>
            <person name="Nori F."/>
            <person name="Ohara O."/>
            <person name="Okazaki Y."/>
            <person name="Orlando V."/>
            <person name="Pang K.C."/>
            <person name="Pavan W.J."/>
            <person name="Pavesi G."/>
            <person name="Pesole G."/>
            <person name="Petrovsky N."/>
            <person name="Piazza S."/>
            <person name="Reed J."/>
            <person name="Reid J.F."/>
            <person name="Ring B.Z."/>
            <person name="Ringwald M."/>
            <person name="Rost B."/>
            <person name="Ruan Y."/>
            <person name="Salzberg S.L."/>
            <person name="Sandelin A."/>
            <person name="Schneider C."/>
            <person name="Schoenbach C."/>
            <person name="Sekiguchi K."/>
            <person name="Semple C.A."/>
            <person name="Seno S."/>
            <person name="Sessa L."/>
            <person name="Sheng Y."/>
            <person name="Shibata Y."/>
            <person name="Shimada H."/>
            <person name="Shimada K."/>
            <person name="Silva D."/>
            <person name="Sinclair B."/>
            <person name="Sperling S."/>
            <person name="Stupka E."/>
            <person name="Sugiura K."/>
            <person name="Sultana R."/>
            <person name="Takenaka Y."/>
            <person name="Taki K."/>
            <person name="Tammoja K."/>
            <person name="Tan S.L."/>
            <person name="Tang S."/>
            <person name="Taylor M.S."/>
            <person name="Tegner J."/>
            <person name="Teichmann S.A."/>
            <person name="Ueda H.R."/>
            <person name="van Nimwegen E."/>
            <person name="Verardo R."/>
            <person name="Wei C.L."/>
            <person name="Yagi K."/>
            <person name="Yamanishi H."/>
            <person name="Zabarovsky E."/>
            <person name="Zhu S."/>
            <person name="Zimmer A."/>
            <person name="Hide W."/>
            <person name="Bult C."/>
            <person name="Grimmond S.M."/>
            <person name="Teasdale R.D."/>
            <person name="Liu E.T."/>
            <person name="Brusic V."/>
            <person name="Quackenbush J."/>
            <person name="Wahlestedt C."/>
            <person name="Mattick J.S."/>
            <person name="Hume D.A."/>
            <person name="Kai C."/>
            <person name="Sasaki D."/>
            <person name="Tomaru Y."/>
            <person name="Fukuda S."/>
            <person name="Kanamori-Katayama M."/>
            <person name="Suzuki M."/>
            <person name="Aoki J."/>
            <person name="Arakawa T."/>
            <person name="Iida J."/>
            <person name="Imamura K."/>
            <person name="Itoh M."/>
            <person name="Kato T."/>
            <person name="Kawaji H."/>
            <person name="Kawagashira N."/>
            <person name="Kawashima T."/>
            <person name="Kojima M."/>
            <person name="Kondo S."/>
            <person name="Konno H."/>
            <person name="Nakano K."/>
            <person name="Ninomiya N."/>
            <person name="Nishio T."/>
            <person name="Okada M."/>
            <person name="Plessy C."/>
            <person name="Shibata K."/>
            <person name="Shiraki T."/>
            <person name="Suzuki S."/>
            <person name="Tagami M."/>
            <person name="Waki K."/>
            <person name="Watahiki A."/>
            <person name="Okamura-Oho Y."/>
            <person name="Suzuki H."/>
            <person name="Kawai J."/>
            <person name="Hayashizaki Y."/>
        </authorList>
    </citation>
    <scope>NUCLEOTIDE SEQUENCE [MRNA] (ISOFORM 2)</scope>
    <scope>NUCLEOTIDE SEQUENCE [LARGE SCALE MRNA] OF 735-1324</scope>
    <source>
        <strain>C57BL/6J</strain>
        <tissue>Brain</tissue>
        <tissue>Cerebellum</tissue>
        <tissue>Heart</tissue>
    </source>
</reference>
<reference key="3">
    <citation type="journal article" date="2009" name="PLoS Biol.">
        <title>Lineage-specific biology revealed by a finished genome assembly of the mouse.</title>
        <authorList>
            <person name="Church D.M."/>
            <person name="Goodstadt L."/>
            <person name="Hillier L.W."/>
            <person name="Zody M.C."/>
            <person name="Goldstein S."/>
            <person name="She X."/>
            <person name="Bult C.J."/>
            <person name="Agarwala R."/>
            <person name="Cherry J.L."/>
            <person name="DiCuccio M."/>
            <person name="Hlavina W."/>
            <person name="Kapustin Y."/>
            <person name="Meric P."/>
            <person name="Maglott D."/>
            <person name="Birtle Z."/>
            <person name="Marques A.C."/>
            <person name="Graves T."/>
            <person name="Zhou S."/>
            <person name="Teague B."/>
            <person name="Potamousis K."/>
            <person name="Churas C."/>
            <person name="Place M."/>
            <person name="Herschleb J."/>
            <person name="Runnheim R."/>
            <person name="Forrest D."/>
            <person name="Amos-Landgraf J."/>
            <person name="Schwartz D.C."/>
            <person name="Cheng Z."/>
            <person name="Lindblad-Toh K."/>
            <person name="Eichler E.E."/>
            <person name="Ponting C.P."/>
        </authorList>
    </citation>
    <scope>NUCLEOTIDE SEQUENCE [LARGE SCALE GENOMIC DNA]</scope>
    <source>
        <strain>C57BL/6J</strain>
    </source>
</reference>
<reference key="4">
    <citation type="journal article" date="2004" name="DNA Res.">
        <title>Prediction of the coding sequences of mouse homologues of KIAA gene: IV. The complete nucleotide sequences of 500 mouse KIAA-homologous cDNAs identified by screening of terminal sequences of cDNA clones randomly sampled from size-fractionated libraries.</title>
        <authorList>
            <person name="Okazaki N."/>
            <person name="Kikuno R."/>
            <person name="Ohara R."/>
            <person name="Inamoto S."/>
            <person name="Koseki H."/>
            <person name="Hiraoka S."/>
            <person name="Saga Y."/>
            <person name="Seino S."/>
            <person name="Nishimura M."/>
            <person name="Kaisho T."/>
            <person name="Hoshino K."/>
            <person name="Kitamura H."/>
            <person name="Nagase T."/>
            <person name="Ohara O."/>
            <person name="Koga H."/>
        </authorList>
    </citation>
    <scope>NUCLEOTIDE SEQUENCE [LARGE SCALE MRNA] OF 63-1325 (ISOFORM 1)</scope>
    <source>
        <tissue>Pancreatic islet</tissue>
    </source>
</reference>
<reference key="5">
    <citation type="journal article" date="2008" name="Am. J. Hum. Genet.">
        <title>Loss of nephrocystin-3 function can cause embryonic lethality, Meckel-Gruber-like syndrome, situs inversus, and renal-hepatic-pancreatic dysplasia.</title>
        <authorList>
            <person name="Bergmann C."/>
            <person name="Fliegauf M."/>
            <person name="Bruechle N.O."/>
            <person name="Frank V."/>
            <person name="Olbrich H."/>
            <person name="Kirschner J."/>
            <person name="Schermer B."/>
            <person name="Schmedding I."/>
            <person name="Kispert A."/>
            <person name="Kraenzlin B."/>
            <person name="Nuernberg G."/>
            <person name="Becker C."/>
            <person name="Grimm T."/>
            <person name="Girschick G."/>
            <person name="Lynch S.A."/>
            <person name="Kelehan P."/>
            <person name="Senderek J."/>
            <person name="Neuhaus T.J."/>
            <person name="Stallmach T."/>
            <person name="Zentgraf H."/>
            <person name="Nuernberg P."/>
            <person name="Gretz N."/>
            <person name="Lo C."/>
            <person name="Lienkamp S."/>
            <person name="Schaefer T."/>
            <person name="Walz G."/>
            <person name="Benzing T."/>
            <person name="Zerres K."/>
            <person name="Omran H."/>
        </authorList>
    </citation>
    <scope>FUNCTION</scope>
    <scope>DISRUPTION PHENOTYPE</scope>
</reference>
<accession>Q7TNH6</accession>
<accession>D6RHB4</accession>
<accession>E9Q5X1</accession>
<accession>E9QN29</accession>
<accession>Q69Z39</accession>
<accession>Q8C798</accession>
<accession>Q8C7Z3</accession>
<accession>Q9D6D1</accession>
<gene>
    <name type="primary">Nphp3</name>
    <name type="synonym">Kiaa2000</name>
</gene>
<comment type="function">
    <text evidence="5">Required for normal ciliary development and function. Inhibits disheveled-1-induced canonical Wnt-signaling activity and may also play a role in the control of non-canonical Wnt signaling that regulates planar cell polarity. Probably acts as a molecular switch between different Wnt signaling pathways. Required for proper convergent extension cell movements.</text>
</comment>
<comment type="subunit">
    <text evidence="1">Interacts with NPHP1 and INVS/NPHP2. Interacts (when myristoylated) with UNC119 and UNC119B; interaction is required for localization to cilium (By similarity). Interacts with CEP164 (By similarity). Component of a complex containing at least ANKS6, INVS, NEK8 and NPHP3. ANKS6 may organize complex assembly by linking INVS and NPHP3 to NEK8 and INVS may target the complex to the proximal ciliary axoneme (By similarity).</text>
</comment>
<comment type="subcellular location">
    <subcellularLocation>
        <location evidence="1">Cell projection</location>
        <location evidence="1">Cilium</location>
    </subcellularLocation>
    <text evidence="1">Localization to cilium is mediated via interaction with UNC119 and UNC119B, which bind to the myristoyl moiety of the N-terminus.</text>
</comment>
<comment type="alternative products">
    <event type="alternative splicing"/>
    <isoform>
        <id>Q7TNH6-1</id>
        <name>1</name>
        <sequence type="displayed"/>
    </isoform>
    <isoform>
        <id>Q7TNH6-2</id>
        <name>2</name>
        <sequence type="described" ref="VSP_014492 VSP_014493"/>
    </isoform>
    <text>Additional isoforms seem to exist.</text>
</comment>
<comment type="developmental stage">
    <text evidence="4">In gastrulation-stage embryos, it is confined to the node between 7.5 and 8.25 dpc In sections of 14.5 and 16.5 dpc. embryos, it is strongly expressed in neural tissue (brain and ganglions). Also weakly expressed included in kidney tubules, retina, respiratory epithelium, biliary tract and liver. In the adult kidney, it is weakly but specifically expressed in distal tubules located at the cortico-medullary border, which corresponds to the site of cyst formation in mice lacking Nphp3. Expressed in retina and liver.</text>
</comment>
<comment type="disease">
    <text>Defects in Nphp3 may be the cause of polycystic kidney disease (pcy). Pcy is a recessive disorder causing chronic renal failure. The Pcy phenotype can be slowed by diet modification such as protein restriction, administration of soy-based proteins, administration of methylprednisolone or treatment with V2R antagonist. In contrast administration of bicarbonate/citrate has no effect.</text>
</comment>
<comment type="disruption phenotype">
    <text evidence="5">Mice show situs inversus, congenital heart defects, and embryonic lethality.</text>
</comment>
<comment type="sequence caution" evidence="7">
    <conflict type="erroneous termination">
        <sequence resource="EMBL-CDS" id="BAB29319"/>
    </conflict>
    <text>Extended C-terminus.</text>
</comment>
<comment type="sequence caution" evidence="7">
    <conflict type="frameshift">
        <sequence resource="EMBL-CDS" id="BAC33481"/>
    </conflict>
</comment>
<comment type="sequence caution" evidence="7">
    <conflict type="erroneous initiation">
        <sequence resource="EMBL-CDS" id="BAC34915"/>
    </conflict>
    <text>Extended N-terminus.</text>
</comment>
<feature type="initiator methionine" description="Removed">
    <location>
        <position position="1"/>
    </location>
</feature>
<feature type="chain" id="PRO_0000106302" description="Nephrocystin-3">
    <location>
        <begin position="2"/>
        <end position="1325"/>
    </location>
</feature>
<feature type="repeat" description="TPR 1">
    <location>
        <begin position="467"/>
        <end position="500"/>
    </location>
</feature>
<feature type="repeat" description="TPR 2">
    <location>
        <begin position="881"/>
        <end position="914"/>
    </location>
</feature>
<feature type="repeat" description="TPR 3">
    <location>
        <begin position="916"/>
        <end position="937"/>
    </location>
</feature>
<feature type="repeat" description="TPR 4">
    <location>
        <begin position="938"/>
        <end position="971"/>
    </location>
</feature>
<feature type="repeat" description="TPR 5">
    <location>
        <begin position="980"/>
        <end position="1013"/>
    </location>
</feature>
<feature type="repeat" description="TPR 6">
    <location>
        <begin position="1022"/>
        <end position="1055"/>
    </location>
</feature>
<feature type="repeat" description="TPR 7">
    <location>
        <begin position="1088"/>
        <end position="1121"/>
    </location>
</feature>
<feature type="repeat" description="TPR 8">
    <location>
        <begin position="1130"/>
        <end position="1163"/>
    </location>
</feature>
<feature type="repeat" description="TPR 9">
    <location>
        <begin position="1172"/>
        <end position="1205"/>
    </location>
</feature>
<feature type="repeat" description="TPR 10">
    <location>
        <begin position="1214"/>
        <end position="1247"/>
    </location>
</feature>
<feature type="repeat" description="TPR 11">
    <location>
        <begin position="1256"/>
        <end position="1289"/>
    </location>
</feature>
<feature type="region of interest" description="Disordered" evidence="3">
    <location>
        <begin position="1"/>
        <end position="20"/>
    </location>
</feature>
<feature type="region of interest" description="Disordered" evidence="3">
    <location>
        <begin position="1293"/>
        <end position="1325"/>
    </location>
</feature>
<feature type="coiled-coil region" evidence="2">
    <location>
        <begin position="107"/>
        <end position="203"/>
    </location>
</feature>
<feature type="compositionally biased region" description="Polar residues" evidence="3">
    <location>
        <begin position="1299"/>
        <end position="1325"/>
    </location>
</feature>
<feature type="lipid moiety-binding region" description="N-myristoyl glycine" evidence="1">
    <location>
        <position position="2"/>
    </location>
</feature>
<feature type="splice variant" id="VSP_014492" description="In isoform 2." evidence="6">
    <original>DILGLENTDVEEKDGG</original>
    <variation>VNMRFSVKFSSKIASW</variation>
    <location>
        <begin position="447"/>
        <end position="462"/>
    </location>
</feature>
<feature type="splice variant" id="VSP_014493" description="In isoform 2." evidence="6">
    <location>
        <begin position="463"/>
        <end position="1325"/>
    </location>
</feature>
<feature type="sequence variant" description="In pcy." evidence="4">
    <original>I</original>
    <variation>S</variation>
    <location>
        <position position="614"/>
    </location>
</feature>
<feature type="sequence conflict" description="In Ref. 1; AAP84621." evidence="7" ref="1">
    <original>P</original>
    <variation>H</variation>
    <location>
        <position position="308"/>
    </location>
</feature>
<feature type="sequence conflict" description="In Ref. 1; AAP84621." evidence="7" ref="1">
    <original>T</original>
    <variation>A</variation>
    <location>
        <position position="493"/>
    </location>
</feature>
<feature type="sequence conflict" description="In Ref. 1; AAP84621." evidence="7" ref="1">
    <original>I</original>
    <variation>L</variation>
    <location>
        <position position="674"/>
    </location>
</feature>
<feature type="sequence conflict" description="In Ref. 1; AAP84621." evidence="7" ref="1">
    <original>T</original>
    <variation>I</variation>
    <location>
        <position position="678"/>
    </location>
</feature>
<feature type="sequence conflict" description="In Ref. 1; AAP84621." evidence="7" ref="1">
    <original>M</original>
    <variation>V</variation>
    <location>
        <position position="684"/>
    </location>
</feature>
<feature type="sequence conflict" description="In Ref. 1; AAP84621." evidence="7" ref="1">
    <location>
        <position position="706"/>
    </location>
</feature>
<feature type="sequence conflict" description="In Ref. 1; AAP84621." evidence="7" ref="1">
    <original>H</original>
    <variation>R</variation>
    <location>
        <position position="732"/>
    </location>
</feature>
<feature type="sequence conflict" description="In Ref. 1; AAP84621." evidence="7" ref="1">
    <original>V</original>
    <variation>I</variation>
    <location>
        <position position="799"/>
    </location>
</feature>
<feature type="sequence conflict" description="In Ref. 1; AAP84621." evidence="7" ref="1">
    <original>A</original>
    <variation>T</variation>
    <location>
        <position position="849"/>
    </location>
</feature>
<feature type="sequence conflict" description="In Ref. 2; BAB29319." evidence="7" ref="2">
    <original>N</original>
    <variation>D</variation>
    <location>
        <position position="1092"/>
    </location>
</feature>
<feature type="sequence conflict" description="In Ref. 2; BAB29319." evidence="7" ref="2">
    <original>L</original>
    <variation>S</variation>
    <location>
        <position position="1293"/>
    </location>
</feature>
<dbReference type="EMBL" id="AY259499">
    <property type="protein sequence ID" value="AAP84621.1"/>
    <property type="molecule type" value="mRNA"/>
</dbReference>
<dbReference type="EMBL" id="AK014393">
    <property type="protein sequence ID" value="BAB29319.1"/>
    <property type="status" value="ALT_SEQ"/>
    <property type="molecule type" value="mRNA"/>
</dbReference>
<dbReference type="EMBL" id="AK048877">
    <property type="protein sequence ID" value="BAC33481.1"/>
    <property type="status" value="ALT_FRAME"/>
    <property type="molecule type" value="mRNA"/>
</dbReference>
<dbReference type="EMBL" id="AC138739">
    <property type="status" value="NOT_ANNOTATED_CDS"/>
    <property type="molecule type" value="Genomic_DNA"/>
</dbReference>
<dbReference type="EMBL" id="AK052281">
    <property type="protein sequence ID" value="BAC34915.1"/>
    <property type="status" value="ALT_INIT"/>
    <property type="molecule type" value="mRNA"/>
</dbReference>
<dbReference type="EMBL" id="AK173327">
    <property type="protein sequence ID" value="BAD32605.1"/>
    <property type="molecule type" value="mRNA"/>
</dbReference>
<dbReference type="CCDS" id="CCDS40749.1">
    <molecule id="Q7TNH6-1"/>
</dbReference>
<dbReference type="RefSeq" id="NP_082997.3">
    <molecule id="Q7TNH6-1"/>
    <property type="nucleotide sequence ID" value="NM_028721.3"/>
</dbReference>
<dbReference type="RefSeq" id="NP_766048.1">
    <molecule id="Q7TNH6-2"/>
    <property type="nucleotide sequence ID" value="NM_172460.1"/>
</dbReference>
<dbReference type="SMR" id="Q7TNH6"/>
<dbReference type="BioGRID" id="216433">
    <property type="interactions" value="15"/>
</dbReference>
<dbReference type="FunCoup" id="Q7TNH6">
    <property type="interactions" value="246"/>
</dbReference>
<dbReference type="IntAct" id="Q7TNH6">
    <property type="interactions" value="7"/>
</dbReference>
<dbReference type="STRING" id="10090.ENSMUSP00000035167"/>
<dbReference type="GlyGen" id="Q7TNH6">
    <property type="glycosylation" value="1 site"/>
</dbReference>
<dbReference type="iPTMnet" id="Q7TNH6"/>
<dbReference type="PhosphoSitePlus" id="Q7TNH6"/>
<dbReference type="jPOST" id="Q7TNH6"/>
<dbReference type="PaxDb" id="10090-ENSMUSP00000035167"/>
<dbReference type="ProteomicsDB" id="293952">
    <molecule id="Q7TNH6-1"/>
</dbReference>
<dbReference type="ProteomicsDB" id="293953">
    <molecule id="Q7TNH6-2"/>
</dbReference>
<dbReference type="Pumba" id="Q7TNH6"/>
<dbReference type="DNASU" id="74025"/>
<dbReference type="Ensembl" id="ENSMUST00000035167.15">
    <molecule id="Q7TNH6-1"/>
    <property type="protein sequence ID" value="ENSMUSP00000035167.9"/>
    <property type="gene ID" value="ENSMUSG00000032558.20"/>
</dbReference>
<dbReference type="GeneID" id="74025"/>
<dbReference type="KEGG" id="mmu:74025"/>
<dbReference type="UCSC" id="uc009rhb.2">
    <molecule id="Q7TNH6-2"/>
    <property type="organism name" value="mouse"/>
</dbReference>
<dbReference type="UCSC" id="uc009rhc.2">
    <molecule id="Q7TNH6-1"/>
    <property type="organism name" value="mouse"/>
</dbReference>
<dbReference type="AGR" id="MGI:1921275"/>
<dbReference type="CTD" id="27031"/>
<dbReference type="MGI" id="MGI:1921275">
    <property type="gene designation" value="Nphp3"/>
</dbReference>
<dbReference type="VEuPathDB" id="HostDB:ENSMUSG00000032558"/>
<dbReference type="eggNOG" id="KOG1840">
    <property type="taxonomic scope" value="Eukaryota"/>
</dbReference>
<dbReference type="GeneTree" id="ENSGT00940000156398"/>
<dbReference type="HOGENOM" id="CLU_007418_0_0_1"/>
<dbReference type="InParanoid" id="Q7TNH6"/>
<dbReference type="OMA" id="FKIHQKA"/>
<dbReference type="OrthoDB" id="626167at2759"/>
<dbReference type="PhylomeDB" id="Q7TNH6"/>
<dbReference type="TreeFam" id="TF314010"/>
<dbReference type="Reactome" id="R-MMU-5624138">
    <property type="pathway name" value="Trafficking of myristoylated proteins to the cilium"/>
</dbReference>
<dbReference type="BioGRID-ORCS" id="74025">
    <property type="hits" value="1 hit in 78 CRISPR screens"/>
</dbReference>
<dbReference type="ChiTaRS" id="Nphp3">
    <property type="organism name" value="mouse"/>
</dbReference>
<dbReference type="PRO" id="PR:Q7TNH6"/>
<dbReference type="Proteomes" id="UP000000589">
    <property type="component" value="Chromosome 9"/>
</dbReference>
<dbReference type="RNAct" id="Q7TNH6">
    <property type="molecule type" value="protein"/>
</dbReference>
<dbReference type="Bgee" id="ENSMUSG00000032558">
    <property type="expression patterns" value="Expressed in ventricular zone and 65 other cell types or tissues"/>
</dbReference>
<dbReference type="ExpressionAtlas" id="Q7TNH6">
    <property type="expression patterns" value="baseline and differential"/>
</dbReference>
<dbReference type="GO" id="GO:0097546">
    <property type="term" value="C:ciliary base"/>
    <property type="evidence" value="ECO:0000314"/>
    <property type="project" value="MGI"/>
</dbReference>
<dbReference type="GO" id="GO:0097543">
    <property type="term" value="C:ciliary inversin compartment"/>
    <property type="evidence" value="ECO:0000314"/>
    <property type="project" value="MGI"/>
</dbReference>
<dbReference type="GO" id="GO:0005929">
    <property type="term" value="C:cilium"/>
    <property type="evidence" value="ECO:0000314"/>
    <property type="project" value="MGI"/>
</dbReference>
<dbReference type="GO" id="GO:0003283">
    <property type="term" value="P:atrial septum development"/>
    <property type="evidence" value="ECO:0007669"/>
    <property type="project" value="Ensembl"/>
</dbReference>
<dbReference type="GO" id="GO:0060271">
    <property type="term" value="P:cilium assembly"/>
    <property type="evidence" value="ECO:0000315"/>
    <property type="project" value="BHF-UCL"/>
</dbReference>
<dbReference type="GO" id="GO:0060027">
    <property type="term" value="P:convergent extension involved in gastrulation"/>
    <property type="evidence" value="ECO:0007669"/>
    <property type="project" value="Ensembl"/>
</dbReference>
<dbReference type="GO" id="GO:0071908">
    <property type="term" value="P:determination of intestine left/right asymmetry"/>
    <property type="evidence" value="ECO:0007669"/>
    <property type="project" value="Ensembl"/>
</dbReference>
<dbReference type="GO" id="GO:0007368">
    <property type="term" value="P:determination of left/right symmetry"/>
    <property type="evidence" value="ECO:0000315"/>
    <property type="project" value="BHF-UCL"/>
</dbReference>
<dbReference type="GO" id="GO:0071910">
    <property type="term" value="P:determination of liver left/right asymmetry"/>
    <property type="evidence" value="ECO:0007669"/>
    <property type="project" value="Ensembl"/>
</dbReference>
<dbReference type="GO" id="GO:0035469">
    <property type="term" value="P:determination of pancreatic left/right asymmetry"/>
    <property type="evidence" value="ECO:0007669"/>
    <property type="project" value="Ensembl"/>
</dbReference>
<dbReference type="GO" id="GO:0071909">
    <property type="term" value="P:determination of stomach left/right asymmetry"/>
    <property type="evidence" value="ECO:0007669"/>
    <property type="project" value="Ensembl"/>
</dbReference>
<dbReference type="GO" id="GO:0007163">
    <property type="term" value="P:establishment or maintenance of cell polarity"/>
    <property type="evidence" value="ECO:0000315"/>
    <property type="project" value="MGI"/>
</dbReference>
<dbReference type="GO" id="GO:0030198">
    <property type="term" value="P:extracellular matrix organization"/>
    <property type="evidence" value="ECO:0000315"/>
    <property type="project" value="MGI"/>
</dbReference>
<dbReference type="GO" id="GO:0001947">
    <property type="term" value="P:heart looping"/>
    <property type="evidence" value="ECO:0007669"/>
    <property type="project" value="Ensembl"/>
</dbReference>
<dbReference type="GO" id="GO:0001822">
    <property type="term" value="P:kidney development"/>
    <property type="evidence" value="ECO:0000315"/>
    <property type="project" value="MGI"/>
</dbReference>
<dbReference type="GO" id="GO:0060993">
    <property type="term" value="P:kidney morphogenesis"/>
    <property type="evidence" value="ECO:0000315"/>
    <property type="project" value="BHF-UCL"/>
</dbReference>
<dbReference type="GO" id="GO:0006629">
    <property type="term" value="P:lipid metabolic process"/>
    <property type="evidence" value="ECO:0000315"/>
    <property type="project" value="MGI"/>
</dbReference>
<dbReference type="GO" id="GO:0030324">
    <property type="term" value="P:lung development"/>
    <property type="evidence" value="ECO:0007669"/>
    <property type="project" value="Ensembl"/>
</dbReference>
<dbReference type="GO" id="GO:0048496">
    <property type="term" value="P:maintenance of animal organ identity"/>
    <property type="evidence" value="ECO:0000315"/>
    <property type="project" value="HGNC-UCL"/>
</dbReference>
<dbReference type="GO" id="GO:0090090">
    <property type="term" value="P:negative regulation of canonical Wnt signaling pathway"/>
    <property type="evidence" value="ECO:0000250"/>
    <property type="project" value="UniProtKB"/>
</dbReference>
<dbReference type="GO" id="GO:1905515">
    <property type="term" value="P:non-motile cilium assembly"/>
    <property type="evidence" value="ECO:0000315"/>
    <property type="project" value="MGI"/>
</dbReference>
<dbReference type="GO" id="GO:0045494">
    <property type="term" value="P:photoreceptor cell maintenance"/>
    <property type="evidence" value="ECO:0007669"/>
    <property type="project" value="Ensembl"/>
</dbReference>
<dbReference type="GO" id="GO:2000095">
    <property type="term" value="P:regulation of Wnt signaling pathway, planar cell polarity pathway"/>
    <property type="evidence" value="ECO:0000250"/>
    <property type="project" value="UniProtKB"/>
</dbReference>
<dbReference type="GO" id="GO:0072189">
    <property type="term" value="P:ureter development"/>
    <property type="evidence" value="ECO:0007669"/>
    <property type="project" value="Ensembl"/>
</dbReference>
<dbReference type="GO" id="GO:0016055">
    <property type="term" value="P:Wnt signaling pathway"/>
    <property type="evidence" value="ECO:0007669"/>
    <property type="project" value="UniProtKB-KW"/>
</dbReference>
<dbReference type="FunFam" id="1.25.40.10:FF:000150">
    <property type="entry name" value="Nephrocystin-3"/>
    <property type="match status" value="1"/>
</dbReference>
<dbReference type="FunFam" id="1.25.40.10:FF:000362">
    <property type="entry name" value="Nephrocystin-3"/>
    <property type="match status" value="1"/>
</dbReference>
<dbReference type="FunFam" id="3.40.50.300:FF:000693">
    <property type="entry name" value="Nephrocystin-3"/>
    <property type="match status" value="1"/>
</dbReference>
<dbReference type="FunFam" id="1.25.40.10:FF:000301">
    <property type="entry name" value="Nephronophthisis 3"/>
    <property type="match status" value="1"/>
</dbReference>
<dbReference type="Gene3D" id="3.40.50.300">
    <property type="entry name" value="P-loop containing nucleotide triphosphate hydrolases"/>
    <property type="match status" value="1"/>
</dbReference>
<dbReference type="Gene3D" id="1.25.40.10">
    <property type="entry name" value="Tetratricopeptide repeat domain"/>
    <property type="match status" value="3"/>
</dbReference>
<dbReference type="InterPro" id="IPR056884">
    <property type="entry name" value="NPHP3-like_N"/>
</dbReference>
<dbReference type="InterPro" id="IPR056886">
    <property type="entry name" value="NPHP3_ab_dom"/>
</dbReference>
<dbReference type="InterPro" id="IPR056883">
    <property type="entry name" value="NPHP3_hel"/>
</dbReference>
<dbReference type="InterPro" id="IPR027417">
    <property type="entry name" value="P-loop_NTPase"/>
</dbReference>
<dbReference type="InterPro" id="IPR011990">
    <property type="entry name" value="TPR-like_helical_dom_sf"/>
</dbReference>
<dbReference type="InterPro" id="IPR056885">
    <property type="entry name" value="TPR_NPHP3"/>
</dbReference>
<dbReference type="InterPro" id="IPR019734">
    <property type="entry name" value="TPR_rpt"/>
</dbReference>
<dbReference type="PANTHER" id="PTHR45641:SF19">
    <property type="entry name" value="NEPHROCYSTIN-3"/>
    <property type="match status" value="1"/>
</dbReference>
<dbReference type="PANTHER" id="PTHR45641">
    <property type="entry name" value="TETRATRICOPEPTIDE REPEAT PROTEIN (AFU_ORTHOLOGUE AFUA_6G03870)"/>
    <property type="match status" value="1"/>
</dbReference>
<dbReference type="Pfam" id="PF25022">
    <property type="entry name" value="NPHP3"/>
    <property type="match status" value="1"/>
</dbReference>
<dbReference type="Pfam" id="PF24884">
    <property type="entry name" value="NPHP3_hel"/>
    <property type="match status" value="1"/>
</dbReference>
<dbReference type="Pfam" id="PF24883">
    <property type="entry name" value="NPHP3_N"/>
    <property type="match status" value="1"/>
</dbReference>
<dbReference type="Pfam" id="PF13424">
    <property type="entry name" value="TPR_12"/>
    <property type="match status" value="2"/>
</dbReference>
<dbReference type="Pfam" id="PF13176">
    <property type="entry name" value="TPR_7"/>
    <property type="match status" value="1"/>
</dbReference>
<dbReference type="Pfam" id="PF24885">
    <property type="entry name" value="TPR_NPHP3"/>
    <property type="match status" value="1"/>
</dbReference>
<dbReference type="SMART" id="SM00028">
    <property type="entry name" value="TPR"/>
    <property type="match status" value="8"/>
</dbReference>
<dbReference type="SUPFAM" id="SSF52540">
    <property type="entry name" value="P-loop containing nucleoside triphosphate hydrolases"/>
    <property type="match status" value="1"/>
</dbReference>
<dbReference type="SUPFAM" id="SSF48452">
    <property type="entry name" value="TPR-like"/>
    <property type="match status" value="2"/>
</dbReference>
<dbReference type="PROSITE" id="PS50005">
    <property type="entry name" value="TPR"/>
    <property type="match status" value="8"/>
</dbReference>
<dbReference type="PROSITE" id="PS50293">
    <property type="entry name" value="TPR_REGION"/>
    <property type="match status" value="1"/>
</dbReference>
<evidence type="ECO:0000250" key="1"/>
<evidence type="ECO:0000255" key="2"/>
<evidence type="ECO:0000256" key="3">
    <source>
        <dbReference type="SAM" id="MobiDB-lite"/>
    </source>
</evidence>
<evidence type="ECO:0000269" key="4">
    <source>
    </source>
</evidence>
<evidence type="ECO:0000269" key="5">
    <source>
    </source>
</evidence>
<evidence type="ECO:0000303" key="6">
    <source>
    </source>
</evidence>
<evidence type="ECO:0000305" key="7"/>